<dbReference type="EC" id="7.6.2.5" evidence="1"/>
<dbReference type="EMBL" id="U52866">
    <property type="protein sequence ID" value="AAB40904.1"/>
    <property type="molecule type" value="Genomic_DNA"/>
</dbReference>
<dbReference type="PIR" id="JC5483">
    <property type="entry name" value="JC5483"/>
</dbReference>
<dbReference type="SMR" id="Q52733"/>
<dbReference type="STRING" id="29449.NXC12_CH04103"/>
<dbReference type="GO" id="GO:0005886">
    <property type="term" value="C:plasma membrane"/>
    <property type="evidence" value="ECO:0007669"/>
    <property type="project" value="UniProtKB-SubCell"/>
</dbReference>
<dbReference type="GO" id="GO:0015439">
    <property type="term" value="F:ABC-type heme transporter activity"/>
    <property type="evidence" value="ECO:0007669"/>
    <property type="project" value="UniProtKB-EC"/>
</dbReference>
<dbReference type="GO" id="GO:0005524">
    <property type="term" value="F:ATP binding"/>
    <property type="evidence" value="ECO:0007669"/>
    <property type="project" value="UniProtKB-KW"/>
</dbReference>
<dbReference type="GO" id="GO:0016887">
    <property type="term" value="F:ATP hydrolysis activity"/>
    <property type="evidence" value="ECO:0007669"/>
    <property type="project" value="InterPro"/>
</dbReference>
<dbReference type="GO" id="GO:0017004">
    <property type="term" value="P:cytochrome complex assembly"/>
    <property type="evidence" value="ECO:0007669"/>
    <property type="project" value="UniProtKB-KW"/>
</dbReference>
<dbReference type="Gene3D" id="3.40.50.300">
    <property type="entry name" value="P-loop containing nucleotide triphosphate hydrolases"/>
    <property type="match status" value="1"/>
</dbReference>
<dbReference type="InterPro" id="IPR003593">
    <property type="entry name" value="AAA+_ATPase"/>
</dbReference>
<dbReference type="InterPro" id="IPR003439">
    <property type="entry name" value="ABC_transporter-like_ATP-bd"/>
</dbReference>
<dbReference type="InterPro" id="IPR017871">
    <property type="entry name" value="ABC_transporter-like_CS"/>
</dbReference>
<dbReference type="InterPro" id="IPR005895">
    <property type="entry name" value="ABC_transptr_haem_export_CcmA"/>
</dbReference>
<dbReference type="InterPro" id="IPR027417">
    <property type="entry name" value="P-loop_NTPase"/>
</dbReference>
<dbReference type="NCBIfam" id="TIGR01189">
    <property type="entry name" value="ccmA"/>
    <property type="match status" value="1"/>
</dbReference>
<dbReference type="PANTHER" id="PTHR43499">
    <property type="entry name" value="ABC TRANSPORTER I FAMILY MEMBER 1"/>
    <property type="match status" value="1"/>
</dbReference>
<dbReference type="PANTHER" id="PTHR43499:SF1">
    <property type="entry name" value="ABC TRANSPORTER I FAMILY MEMBER 1"/>
    <property type="match status" value="1"/>
</dbReference>
<dbReference type="Pfam" id="PF00005">
    <property type="entry name" value="ABC_tran"/>
    <property type="match status" value="1"/>
</dbReference>
<dbReference type="SMART" id="SM00382">
    <property type="entry name" value="AAA"/>
    <property type="match status" value="1"/>
</dbReference>
<dbReference type="SUPFAM" id="SSF52540">
    <property type="entry name" value="P-loop containing nucleoside triphosphate hydrolases"/>
    <property type="match status" value="1"/>
</dbReference>
<dbReference type="PROSITE" id="PS00211">
    <property type="entry name" value="ABC_TRANSPORTER_1"/>
    <property type="match status" value="1"/>
</dbReference>
<dbReference type="PROSITE" id="PS50893">
    <property type="entry name" value="ABC_TRANSPORTER_2"/>
    <property type="match status" value="1"/>
</dbReference>
<dbReference type="PROSITE" id="PS51243">
    <property type="entry name" value="CCMA"/>
    <property type="match status" value="1"/>
</dbReference>
<organism>
    <name type="scientific">Rhizobium etli</name>
    <dbReference type="NCBI Taxonomy" id="29449"/>
    <lineage>
        <taxon>Bacteria</taxon>
        <taxon>Pseudomonadati</taxon>
        <taxon>Pseudomonadota</taxon>
        <taxon>Alphaproteobacteria</taxon>
        <taxon>Hyphomicrobiales</taxon>
        <taxon>Rhizobiaceae</taxon>
        <taxon>Rhizobium/Agrobacterium group</taxon>
        <taxon>Rhizobium</taxon>
    </lineage>
</organism>
<protein>
    <recommendedName>
        <fullName evidence="1">Cytochrome c biogenesis ATP-binding export protein CcmA</fullName>
        <ecNumber evidence="1">7.6.2.5</ecNumber>
    </recommendedName>
    <alternativeName>
        <fullName evidence="1">Heme exporter protein A</fullName>
    </alternativeName>
</protein>
<name>CCMA_RHIET</name>
<evidence type="ECO:0000255" key="1">
    <source>
        <dbReference type="HAMAP-Rule" id="MF_01707"/>
    </source>
</evidence>
<comment type="function">
    <text evidence="1">Part of the ABC transporter complex CcmAB involved in the biogenesis of c-type cytochromes; once thought to export heme, this seems not to be the case, but its exact role is uncertain. Responsible for energy coupling to the transport system.</text>
</comment>
<comment type="catalytic activity">
    <reaction evidence="1">
        <text>heme b(in) + ATP + H2O = heme b(out) + ADP + phosphate + H(+)</text>
        <dbReference type="Rhea" id="RHEA:19261"/>
        <dbReference type="ChEBI" id="CHEBI:15377"/>
        <dbReference type="ChEBI" id="CHEBI:15378"/>
        <dbReference type="ChEBI" id="CHEBI:30616"/>
        <dbReference type="ChEBI" id="CHEBI:43474"/>
        <dbReference type="ChEBI" id="CHEBI:60344"/>
        <dbReference type="ChEBI" id="CHEBI:456216"/>
        <dbReference type="EC" id="7.6.2.5"/>
    </reaction>
</comment>
<comment type="subunit">
    <text evidence="1">The complex is composed of two ATP-binding proteins (CcmA) and two transmembrane proteins (CcmB).</text>
</comment>
<comment type="subcellular location">
    <subcellularLocation>
        <location evidence="1">Cell inner membrane</location>
        <topology evidence="1">Peripheral membrane protein</topology>
    </subcellularLocation>
</comment>
<comment type="similarity">
    <text evidence="1">Belongs to the ABC transporter superfamily. CcmA exporter (TC 3.A.1.107) family.</text>
</comment>
<sequence length="215" mass="23127">MHLTAENLAARRGEDMIFINISFYLAAGEALVLTGRNGSGKSTLLRVVAGLLKPEKGTVIFGDKESPEGQHPGEVSHYLGHRNAMKNELTVAENLDFWRHFLRSTCSSADLSVEDATEAVGLSGISHLPFGYLSAGQQRRFAFAKLLVAHRPVWILDEPTAALDASADRLFAGLIEAHLAKGGIVLAATHQPLGLKNAQELKMTGFAGVDRGVWG</sequence>
<keyword id="KW-0067">ATP-binding</keyword>
<keyword id="KW-0997">Cell inner membrane</keyword>
<keyword id="KW-1003">Cell membrane</keyword>
<keyword id="KW-0201">Cytochrome c-type biogenesis</keyword>
<keyword id="KW-0472">Membrane</keyword>
<keyword id="KW-0547">Nucleotide-binding</keyword>
<keyword id="KW-1278">Translocase</keyword>
<keyword id="KW-0813">Transport</keyword>
<reference key="1">
    <citation type="journal article" date="1996" name="Gene">
        <title>Cloning and sequence analysis of the Rhizobium etli ccmA and ccmB genes involved in c-type cytochrome biogenesis.</title>
        <authorList>
            <person name="Aguilar G.R."/>
            <person name="Soberon M."/>
        </authorList>
    </citation>
    <scope>NUCLEOTIDE SEQUENCE [GENOMIC DNA]</scope>
    <source>
        <strain>CE2</strain>
    </source>
</reference>
<gene>
    <name evidence="1" type="primary">ccmA</name>
</gene>
<accession>Q52733</accession>
<feature type="chain" id="PRO_0000092200" description="Cytochrome c biogenesis ATP-binding export protein CcmA">
    <location>
        <begin position="1"/>
        <end position="215"/>
    </location>
</feature>
<feature type="domain" description="ABC transporter" evidence="1">
    <location>
        <begin position="3"/>
        <end position="211"/>
    </location>
</feature>
<feature type="binding site" evidence="1">
    <location>
        <begin position="35"/>
        <end position="42"/>
    </location>
    <ligand>
        <name>ATP</name>
        <dbReference type="ChEBI" id="CHEBI:30616"/>
    </ligand>
</feature>
<proteinExistence type="inferred from homology"/>